<feature type="chain" id="PRO_0000140968" description="Thymidylate synthase">
    <location>
        <begin position="1"/>
        <end position="318"/>
    </location>
</feature>
<feature type="active site" description="Nucleophile" evidence="1">
    <location>
        <position position="200"/>
    </location>
</feature>
<feature type="binding site" description="in other chain" evidence="1">
    <location>
        <position position="25"/>
    </location>
    <ligand>
        <name>dUMP</name>
        <dbReference type="ChEBI" id="CHEBI:246422"/>
        <note>ligand shared between dimeric partners</note>
    </ligand>
</feature>
<feature type="binding site" evidence="1">
    <location>
        <begin position="180"/>
        <end position="181"/>
    </location>
    <ligand>
        <name>dUMP</name>
        <dbReference type="ChEBI" id="CHEBI:246422"/>
        <note>ligand shared between dimeric partners</note>
    </ligand>
</feature>
<feature type="binding site" description="in other chain" evidence="1">
    <location>
        <begin position="220"/>
        <end position="223"/>
    </location>
    <ligand>
        <name>dUMP</name>
        <dbReference type="ChEBI" id="CHEBI:246422"/>
        <note>ligand shared between dimeric partners</note>
    </ligand>
</feature>
<feature type="binding site" evidence="1">
    <location>
        <position position="223"/>
    </location>
    <ligand>
        <name>(6R)-5,10-methylene-5,6,7,8-tetrahydrofolate</name>
        <dbReference type="ChEBI" id="CHEBI:15636"/>
    </ligand>
</feature>
<feature type="binding site" description="in other chain" evidence="1">
    <location>
        <position position="231"/>
    </location>
    <ligand>
        <name>dUMP</name>
        <dbReference type="ChEBI" id="CHEBI:246422"/>
        <note>ligand shared between dimeric partners</note>
    </ligand>
</feature>
<feature type="binding site" description="in other chain" evidence="1">
    <location>
        <begin position="261"/>
        <end position="263"/>
    </location>
    <ligand>
        <name>dUMP</name>
        <dbReference type="ChEBI" id="CHEBI:246422"/>
        <note>ligand shared between dimeric partners</note>
    </ligand>
</feature>
<feature type="binding site" evidence="1">
    <location>
        <position position="317"/>
    </location>
    <ligand>
        <name>(6R)-5,10-methylene-5,6,7,8-tetrahydrofolate</name>
        <dbReference type="ChEBI" id="CHEBI:15636"/>
    </ligand>
</feature>
<protein>
    <recommendedName>
        <fullName evidence="1">Thymidylate synthase</fullName>
        <shortName evidence="1">TS</shortName>
        <shortName evidence="1">TSase</shortName>
        <ecNumber evidence="1">2.1.1.45</ecNumber>
    </recommendedName>
</protein>
<accession>Q74IU3</accession>
<comment type="function">
    <text evidence="1">Catalyzes the reductive methylation of 2'-deoxyuridine-5'-monophosphate (dUMP) to 2'-deoxythymidine-5'-monophosphate (dTMP) while utilizing 5,10-methylenetetrahydrofolate (mTHF) as the methyl donor and reductant in the reaction, yielding dihydrofolate (DHF) as a by-product. This enzymatic reaction provides an intracellular de novo source of dTMP, an essential precursor for DNA biosynthesis.</text>
</comment>
<comment type="catalytic activity">
    <reaction evidence="1">
        <text>dUMP + (6R)-5,10-methylene-5,6,7,8-tetrahydrofolate = 7,8-dihydrofolate + dTMP</text>
        <dbReference type="Rhea" id="RHEA:12104"/>
        <dbReference type="ChEBI" id="CHEBI:15636"/>
        <dbReference type="ChEBI" id="CHEBI:57451"/>
        <dbReference type="ChEBI" id="CHEBI:63528"/>
        <dbReference type="ChEBI" id="CHEBI:246422"/>
        <dbReference type="EC" id="2.1.1.45"/>
    </reaction>
</comment>
<comment type="pathway">
    <text evidence="1">Pyrimidine metabolism; dTTP biosynthesis.</text>
</comment>
<comment type="subunit">
    <text evidence="1">Homodimer.</text>
</comment>
<comment type="subcellular location">
    <subcellularLocation>
        <location evidence="1">Cytoplasm</location>
    </subcellularLocation>
</comment>
<comment type="similarity">
    <text evidence="1">Belongs to the thymidylate synthase family. Bacterial-type ThyA subfamily.</text>
</comment>
<gene>
    <name evidence="1" type="primary">thyA</name>
    <name type="ordered locus">LJ_1471</name>
</gene>
<evidence type="ECO:0000255" key="1">
    <source>
        <dbReference type="HAMAP-Rule" id="MF_00008"/>
    </source>
</evidence>
<name>TYSY_LACJO</name>
<sequence length="318" mass="37037">MATLEQPYLDLLSKIMSEGHDKEDRTGTGTRSLFGAQMRFDLNDGFPILTTKKIPFGLIKSELLWFLRGDTNIRFLLEHNNHIWDEWAFKNWVESNEYQGPDMTNFGLRSQQDPEFKRIYQEEMKKFDQKVLEDQTFAEKYGNLGDVYGAQWRHWQKREGGFIDQIQNVIDQIKKTPYSRRLIVSAWNPEDVPTSALPPCHVLFQFYVNDGCLSLQLYQRSGDMFLGVPFNIASYALLVNLVARETGLKPGEFIHTLGDAHIYKNHFNQVKELLNRSAYDAPMLWLNPDKKLVQDFEMKDIKLINYRHHGTIKAPVAV</sequence>
<reference key="1">
    <citation type="journal article" date="2004" name="Proc. Natl. Acad. Sci. U.S.A.">
        <title>The genome sequence of the probiotic intestinal bacterium Lactobacillus johnsonii NCC 533.</title>
        <authorList>
            <person name="Pridmore R.D."/>
            <person name="Berger B."/>
            <person name="Desiere F."/>
            <person name="Vilanova D."/>
            <person name="Barretto C."/>
            <person name="Pittet A.-C."/>
            <person name="Zwahlen M.-C."/>
            <person name="Rouvet M."/>
            <person name="Altermann E."/>
            <person name="Barrangou R."/>
            <person name="Mollet B."/>
            <person name="Mercenier A."/>
            <person name="Klaenhammer T."/>
            <person name="Arigoni F."/>
            <person name="Schell M.A."/>
        </authorList>
    </citation>
    <scope>NUCLEOTIDE SEQUENCE [LARGE SCALE GENOMIC DNA]</scope>
    <source>
        <strain>CNCM I-1225 / La1 / NCC 533</strain>
    </source>
</reference>
<dbReference type="EC" id="2.1.1.45" evidence="1"/>
<dbReference type="EMBL" id="AE017198">
    <property type="protein sequence ID" value="AAS09239.1"/>
    <property type="molecule type" value="Genomic_DNA"/>
</dbReference>
<dbReference type="RefSeq" id="WP_011162225.1">
    <property type="nucleotide sequence ID" value="NC_005362.1"/>
</dbReference>
<dbReference type="SMR" id="Q74IU3"/>
<dbReference type="KEGG" id="ljo:LJ_1471"/>
<dbReference type="PATRIC" id="fig|257314.6.peg.1288"/>
<dbReference type="eggNOG" id="COG0207">
    <property type="taxonomic scope" value="Bacteria"/>
</dbReference>
<dbReference type="HOGENOM" id="CLU_021669_0_0_9"/>
<dbReference type="UniPathway" id="UPA00575"/>
<dbReference type="Proteomes" id="UP000000581">
    <property type="component" value="Chromosome"/>
</dbReference>
<dbReference type="GO" id="GO:0005829">
    <property type="term" value="C:cytosol"/>
    <property type="evidence" value="ECO:0007669"/>
    <property type="project" value="TreeGrafter"/>
</dbReference>
<dbReference type="GO" id="GO:0004799">
    <property type="term" value="F:thymidylate synthase activity"/>
    <property type="evidence" value="ECO:0007669"/>
    <property type="project" value="UniProtKB-UniRule"/>
</dbReference>
<dbReference type="GO" id="GO:0006231">
    <property type="term" value="P:dTMP biosynthetic process"/>
    <property type="evidence" value="ECO:0007669"/>
    <property type="project" value="UniProtKB-UniRule"/>
</dbReference>
<dbReference type="GO" id="GO:0006235">
    <property type="term" value="P:dTTP biosynthetic process"/>
    <property type="evidence" value="ECO:0007669"/>
    <property type="project" value="UniProtKB-UniRule"/>
</dbReference>
<dbReference type="GO" id="GO:0032259">
    <property type="term" value="P:methylation"/>
    <property type="evidence" value="ECO:0007669"/>
    <property type="project" value="UniProtKB-KW"/>
</dbReference>
<dbReference type="CDD" id="cd00351">
    <property type="entry name" value="TS_Pyrimidine_HMase"/>
    <property type="match status" value="1"/>
</dbReference>
<dbReference type="Gene3D" id="3.30.572.10">
    <property type="entry name" value="Thymidylate synthase/dCMP hydroxymethylase domain"/>
    <property type="match status" value="1"/>
</dbReference>
<dbReference type="HAMAP" id="MF_00008">
    <property type="entry name" value="Thymidy_synth_bact"/>
    <property type="match status" value="1"/>
</dbReference>
<dbReference type="InterPro" id="IPR045097">
    <property type="entry name" value="Thymidate_synth/dCMP_Mease"/>
</dbReference>
<dbReference type="InterPro" id="IPR023451">
    <property type="entry name" value="Thymidate_synth/dCMP_Mease_dom"/>
</dbReference>
<dbReference type="InterPro" id="IPR036926">
    <property type="entry name" value="Thymidate_synth/dCMP_Mease_sf"/>
</dbReference>
<dbReference type="InterPro" id="IPR000398">
    <property type="entry name" value="Thymidylate_synthase"/>
</dbReference>
<dbReference type="InterPro" id="IPR020940">
    <property type="entry name" value="Thymidylate_synthase_AS"/>
</dbReference>
<dbReference type="NCBIfam" id="NF002496">
    <property type="entry name" value="PRK01827.1-2"/>
    <property type="match status" value="1"/>
</dbReference>
<dbReference type="NCBIfam" id="TIGR03284">
    <property type="entry name" value="thym_sym"/>
    <property type="match status" value="1"/>
</dbReference>
<dbReference type="PANTHER" id="PTHR11548:SF9">
    <property type="entry name" value="THYMIDYLATE SYNTHASE"/>
    <property type="match status" value="1"/>
</dbReference>
<dbReference type="PANTHER" id="PTHR11548">
    <property type="entry name" value="THYMIDYLATE SYNTHASE 1"/>
    <property type="match status" value="1"/>
</dbReference>
<dbReference type="Pfam" id="PF00303">
    <property type="entry name" value="Thymidylat_synt"/>
    <property type="match status" value="1"/>
</dbReference>
<dbReference type="PRINTS" id="PR00108">
    <property type="entry name" value="THYMDSNTHASE"/>
</dbReference>
<dbReference type="SUPFAM" id="SSF55831">
    <property type="entry name" value="Thymidylate synthase/dCMP hydroxymethylase"/>
    <property type="match status" value="1"/>
</dbReference>
<dbReference type="PROSITE" id="PS00091">
    <property type="entry name" value="THYMIDYLATE_SYNTHASE"/>
    <property type="match status" value="1"/>
</dbReference>
<keyword id="KW-0963">Cytoplasm</keyword>
<keyword id="KW-0489">Methyltransferase</keyword>
<keyword id="KW-0545">Nucleotide biosynthesis</keyword>
<keyword id="KW-0808">Transferase</keyword>
<organism>
    <name type="scientific">Lactobacillus johnsonii (strain CNCM I-12250 / La1 / NCC 533)</name>
    <dbReference type="NCBI Taxonomy" id="257314"/>
    <lineage>
        <taxon>Bacteria</taxon>
        <taxon>Bacillati</taxon>
        <taxon>Bacillota</taxon>
        <taxon>Bacilli</taxon>
        <taxon>Lactobacillales</taxon>
        <taxon>Lactobacillaceae</taxon>
        <taxon>Lactobacillus</taxon>
    </lineage>
</organism>
<proteinExistence type="inferred from homology"/>